<sequence>MFLGLDLSTQQLKGVVIDESLNVHQEVAVDFDRDLSDYNTIKGVYRNGYEVFAPVCMWLDAIDLLFERLKASVDVSKIQAISGAGQQHASVFLLKGSKKALNSLDAKSSLKQQLESLIHPTSPNWQDASTTKECEELESCIGGAKALADLTGSKAHLRFTGPQIKRFRRLHPETYENTERIALVSNFLASVLLQTEAPLDISDVCGMNLWDIQNEKFDIRLLEEVAGNSKGPDLANKLGTVEINGAKHLGPIGKYFVKKYGFSPNCQIIPLTGDNPATILSLPLRPGKDVLLSLGTSTTALMATQNYVCSPEYHMFAHPVTQNHYMVMLCYKNGSLAREQVRNTINEKYNVSDNTSWDRFNESILNPNIKGAGEKKQLGLFYPQREILPAVGPGTWRFAIQGTELYQVDKDEESWDYPDEDASAIVESQNLDIRMRITPLLTGIPQPDRVYVVGGASRNEAIVFKISQVLGCDVYRLKHGGSNACAVGGAIKAAYAMNGKGFTFEEYVNKSWDESKKIELIMNKPSAQTYEEYGKLLPFLKKAEDIAIQQSDIRH</sequence>
<name>XKS1_SCHPO</name>
<gene>
    <name evidence="2" type="primary">xks1</name>
    <name type="ORF">SPCPJ732.02c</name>
</gene>
<accession>Q9C0U6</accession>
<keyword id="KW-0067">ATP-binding</keyword>
<keyword id="KW-0119">Carbohydrate metabolism</keyword>
<keyword id="KW-0963">Cytoplasm</keyword>
<keyword id="KW-0418">Kinase</keyword>
<keyword id="KW-0547">Nucleotide-binding</keyword>
<keyword id="KW-1185">Reference proteome</keyword>
<keyword id="KW-0808">Transferase</keyword>
<keyword id="KW-0859">Xylose metabolism</keyword>
<comment type="catalytic activity">
    <reaction evidence="2">
        <text>D-xylulose + ATP = D-xylulose 5-phosphate + ADP + H(+)</text>
        <dbReference type="Rhea" id="RHEA:10964"/>
        <dbReference type="ChEBI" id="CHEBI:15378"/>
        <dbReference type="ChEBI" id="CHEBI:17140"/>
        <dbReference type="ChEBI" id="CHEBI:30616"/>
        <dbReference type="ChEBI" id="CHEBI:57737"/>
        <dbReference type="ChEBI" id="CHEBI:456216"/>
        <dbReference type="EC" id="2.7.1.17"/>
    </reaction>
</comment>
<comment type="subcellular location">
    <subcellularLocation>
        <location evidence="4">Cytoplasm</location>
    </subcellularLocation>
</comment>
<comment type="similarity">
    <text evidence="3">Belongs to the FGGY kinase family.</text>
</comment>
<evidence type="ECO:0000250" key="1"/>
<evidence type="ECO:0000250" key="2">
    <source>
        <dbReference type="UniProtKB" id="P42826"/>
    </source>
</evidence>
<evidence type="ECO:0000255" key="3"/>
<evidence type="ECO:0000269" key="4">
    <source>
    </source>
</evidence>
<evidence type="ECO:0000305" key="5"/>
<evidence type="ECO:0000312" key="6">
    <source>
        <dbReference type="EMBL" id="CAC34988.1"/>
    </source>
</evidence>
<protein>
    <recommendedName>
        <fullName>Xylulose kinase</fullName>
        <shortName>Xylulokinase</shortName>
        <ecNumber>2.7.1.17</ecNumber>
    </recommendedName>
</protein>
<proteinExistence type="inferred from homology"/>
<feature type="chain" id="PRO_0000311717" description="Xylulose kinase">
    <location>
        <begin position="1"/>
        <end position="555"/>
    </location>
</feature>
<feature type="binding site" evidence="1">
    <location>
        <position position="88"/>
    </location>
    <ligand>
        <name>substrate</name>
    </ligand>
</feature>
<feature type="binding site" evidence="1">
    <location>
        <position position="158"/>
    </location>
    <ligand>
        <name>substrate</name>
    </ligand>
</feature>
<feature type="binding site" evidence="1">
    <location>
        <position position="274"/>
    </location>
    <ligand>
        <name>substrate</name>
    </ligand>
</feature>
<feature type="binding site" evidence="1">
    <location>
        <position position="275"/>
    </location>
    <ligand>
        <name>substrate</name>
    </ligand>
</feature>
<feature type="binding site" evidence="1">
    <location>
        <position position="357"/>
    </location>
    <ligand>
        <name>ATP</name>
        <dbReference type="ChEBI" id="CHEBI:30616"/>
    </ligand>
</feature>
<feature type="binding site" evidence="1">
    <location>
        <begin position="455"/>
        <end position="456"/>
    </location>
    <ligand>
        <name>ATP</name>
        <dbReference type="ChEBI" id="CHEBI:30616"/>
    </ligand>
</feature>
<feature type="binding site" evidence="1">
    <location>
        <position position="459"/>
    </location>
    <ligand>
        <name>ATP</name>
        <dbReference type="ChEBI" id="CHEBI:30616"/>
    </ligand>
</feature>
<reference evidence="6" key="1">
    <citation type="journal article" date="2002" name="Nature">
        <title>The genome sequence of Schizosaccharomyces pombe.</title>
        <authorList>
            <person name="Wood V."/>
            <person name="Gwilliam R."/>
            <person name="Rajandream M.A."/>
            <person name="Lyne M.H."/>
            <person name="Lyne R."/>
            <person name="Stewart A."/>
            <person name="Sgouros J.G."/>
            <person name="Peat N."/>
            <person name="Hayles J."/>
            <person name="Baker S.G."/>
            <person name="Basham D."/>
            <person name="Bowman S."/>
            <person name="Brooks K."/>
            <person name="Brown D."/>
            <person name="Brown S."/>
            <person name="Chillingworth T."/>
            <person name="Churcher C.M."/>
            <person name="Collins M."/>
            <person name="Connor R."/>
            <person name="Cronin A."/>
            <person name="Davis P."/>
            <person name="Feltwell T."/>
            <person name="Fraser A."/>
            <person name="Gentles S."/>
            <person name="Goble A."/>
            <person name="Hamlin N."/>
            <person name="Harris D.E."/>
            <person name="Hidalgo J."/>
            <person name="Hodgson G."/>
            <person name="Holroyd S."/>
            <person name="Hornsby T."/>
            <person name="Howarth S."/>
            <person name="Huckle E.J."/>
            <person name="Hunt S."/>
            <person name="Jagels K."/>
            <person name="James K.D."/>
            <person name="Jones L."/>
            <person name="Jones M."/>
            <person name="Leather S."/>
            <person name="McDonald S."/>
            <person name="McLean J."/>
            <person name="Mooney P."/>
            <person name="Moule S."/>
            <person name="Mungall K.L."/>
            <person name="Murphy L.D."/>
            <person name="Niblett D."/>
            <person name="Odell C."/>
            <person name="Oliver K."/>
            <person name="O'Neil S."/>
            <person name="Pearson D."/>
            <person name="Quail M.A."/>
            <person name="Rabbinowitsch E."/>
            <person name="Rutherford K.M."/>
            <person name="Rutter S."/>
            <person name="Saunders D."/>
            <person name="Seeger K."/>
            <person name="Sharp S."/>
            <person name="Skelton J."/>
            <person name="Simmonds M.N."/>
            <person name="Squares R."/>
            <person name="Squares S."/>
            <person name="Stevens K."/>
            <person name="Taylor K."/>
            <person name="Taylor R.G."/>
            <person name="Tivey A."/>
            <person name="Walsh S.V."/>
            <person name="Warren T."/>
            <person name="Whitehead S."/>
            <person name="Woodward J.R."/>
            <person name="Volckaert G."/>
            <person name="Aert R."/>
            <person name="Robben J."/>
            <person name="Grymonprez B."/>
            <person name="Weltjens I."/>
            <person name="Vanstreels E."/>
            <person name="Rieger M."/>
            <person name="Schaefer M."/>
            <person name="Mueller-Auer S."/>
            <person name="Gabel C."/>
            <person name="Fuchs M."/>
            <person name="Duesterhoeft A."/>
            <person name="Fritzc C."/>
            <person name="Holzer E."/>
            <person name="Moestl D."/>
            <person name="Hilbert H."/>
            <person name="Borzym K."/>
            <person name="Langer I."/>
            <person name="Beck A."/>
            <person name="Lehrach H."/>
            <person name="Reinhardt R."/>
            <person name="Pohl T.M."/>
            <person name="Eger P."/>
            <person name="Zimmermann W."/>
            <person name="Wedler H."/>
            <person name="Wambutt R."/>
            <person name="Purnelle B."/>
            <person name="Goffeau A."/>
            <person name="Cadieu E."/>
            <person name="Dreano S."/>
            <person name="Gloux S."/>
            <person name="Lelaure V."/>
            <person name="Mottier S."/>
            <person name="Galibert F."/>
            <person name="Aves S.J."/>
            <person name="Xiang Z."/>
            <person name="Hunt C."/>
            <person name="Moore K."/>
            <person name="Hurst S.M."/>
            <person name="Lucas M."/>
            <person name="Rochet M."/>
            <person name="Gaillardin C."/>
            <person name="Tallada V.A."/>
            <person name="Garzon A."/>
            <person name="Thode G."/>
            <person name="Daga R.R."/>
            <person name="Cruzado L."/>
            <person name="Jimenez J."/>
            <person name="Sanchez M."/>
            <person name="del Rey F."/>
            <person name="Benito J."/>
            <person name="Dominguez A."/>
            <person name="Revuelta J.L."/>
            <person name="Moreno S."/>
            <person name="Armstrong J."/>
            <person name="Forsburg S.L."/>
            <person name="Cerutti L."/>
            <person name="Lowe T."/>
            <person name="McCombie W.R."/>
            <person name="Paulsen I."/>
            <person name="Potashkin J."/>
            <person name="Shpakovski G.V."/>
            <person name="Ussery D."/>
            <person name="Barrell B.G."/>
            <person name="Nurse P."/>
        </authorList>
    </citation>
    <scope>NUCLEOTIDE SEQUENCE [LARGE SCALE GENOMIC DNA]</scope>
    <source>
        <strain>972 / ATCC 24843</strain>
    </source>
</reference>
<reference evidence="5" key="2">
    <citation type="journal article" date="2006" name="Nat. Biotechnol.">
        <title>ORFeome cloning and global analysis of protein localization in the fission yeast Schizosaccharomyces pombe.</title>
        <authorList>
            <person name="Matsuyama A."/>
            <person name="Arai R."/>
            <person name="Yashiroda Y."/>
            <person name="Shirai A."/>
            <person name="Kamata A."/>
            <person name="Sekido S."/>
            <person name="Kobayashi Y."/>
            <person name="Hashimoto A."/>
            <person name="Hamamoto M."/>
            <person name="Hiraoka Y."/>
            <person name="Horinouchi S."/>
            <person name="Yoshida M."/>
        </authorList>
    </citation>
    <scope>SUBCELLULAR LOCATION [LARGE SCALE ANALYSIS]</scope>
</reference>
<dbReference type="EC" id="2.7.1.17"/>
<dbReference type="EMBL" id="CU329672">
    <property type="protein sequence ID" value="CAC34988.1"/>
    <property type="molecule type" value="Genomic_DNA"/>
</dbReference>
<dbReference type="RefSeq" id="NP_587930.1">
    <property type="nucleotide sequence ID" value="NM_001022921.2"/>
</dbReference>
<dbReference type="SMR" id="Q9C0U6"/>
<dbReference type="BioGRID" id="276004">
    <property type="interactions" value="22"/>
</dbReference>
<dbReference type="FunCoup" id="Q9C0U6">
    <property type="interactions" value="449"/>
</dbReference>
<dbReference type="STRING" id="284812.Q9C0U6"/>
<dbReference type="iPTMnet" id="Q9C0U6"/>
<dbReference type="PaxDb" id="4896-SPCPJ732.02c.1"/>
<dbReference type="EnsemblFungi" id="SPCPJ732.02c.1">
    <property type="protein sequence ID" value="SPCPJ732.02c.1:pep"/>
    <property type="gene ID" value="SPCPJ732.02c"/>
</dbReference>
<dbReference type="PomBase" id="SPCPJ732.02c">
    <property type="gene designation" value="xks1"/>
</dbReference>
<dbReference type="VEuPathDB" id="FungiDB:SPCPJ732.02c"/>
<dbReference type="eggNOG" id="KOG2531">
    <property type="taxonomic scope" value="Eukaryota"/>
</dbReference>
<dbReference type="HOGENOM" id="CLU_016149_5_0_1"/>
<dbReference type="InParanoid" id="Q9C0U6"/>
<dbReference type="OMA" id="NSCALGG"/>
<dbReference type="PhylomeDB" id="Q9C0U6"/>
<dbReference type="Reactome" id="R-SPO-5661270">
    <property type="pathway name" value="Formation of xylulose-5-phosphate"/>
</dbReference>
<dbReference type="PRO" id="PR:Q9C0U6"/>
<dbReference type="Proteomes" id="UP000002485">
    <property type="component" value="Chromosome III"/>
</dbReference>
<dbReference type="GO" id="GO:0005829">
    <property type="term" value="C:cytosol"/>
    <property type="evidence" value="ECO:0007005"/>
    <property type="project" value="PomBase"/>
</dbReference>
<dbReference type="GO" id="GO:0005634">
    <property type="term" value="C:nucleus"/>
    <property type="evidence" value="ECO:0007005"/>
    <property type="project" value="PomBase"/>
</dbReference>
<dbReference type="GO" id="GO:0005524">
    <property type="term" value="F:ATP binding"/>
    <property type="evidence" value="ECO:0007669"/>
    <property type="project" value="UniProtKB-KW"/>
</dbReference>
<dbReference type="GO" id="GO:0004856">
    <property type="term" value="F:D-xylulokinase activity"/>
    <property type="evidence" value="ECO:0000318"/>
    <property type="project" value="GO_Central"/>
</dbReference>
<dbReference type="GO" id="GO:0042732">
    <property type="term" value="P:D-xylose metabolic process"/>
    <property type="evidence" value="ECO:0007669"/>
    <property type="project" value="UniProtKB-KW"/>
</dbReference>
<dbReference type="GO" id="GO:0005998">
    <property type="term" value="P:xylulose catabolic process"/>
    <property type="evidence" value="ECO:0000266"/>
    <property type="project" value="PomBase"/>
</dbReference>
<dbReference type="GO" id="GO:0005997">
    <property type="term" value="P:xylulose metabolic process"/>
    <property type="evidence" value="ECO:0000318"/>
    <property type="project" value="GO_Central"/>
</dbReference>
<dbReference type="CDD" id="cd07776">
    <property type="entry name" value="ASKHA_NBD_FGGY_SpXK-like"/>
    <property type="match status" value="1"/>
</dbReference>
<dbReference type="FunFam" id="3.30.420.40:FF:000118">
    <property type="entry name" value="Xylulose kinase 2"/>
    <property type="match status" value="1"/>
</dbReference>
<dbReference type="Gene3D" id="3.30.420.40">
    <property type="match status" value="2"/>
</dbReference>
<dbReference type="InterPro" id="IPR043129">
    <property type="entry name" value="ATPase_NBD"/>
</dbReference>
<dbReference type="InterPro" id="IPR042024">
    <property type="entry name" value="D-XK_euk"/>
</dbReference>
<dbReference type="InterPro" id="IPR018485">
    <property type="entry name" value="FGGY_C"/>
</dbReference>
<dbReference type="InterPro" id="IPR018484">
    <property type="entry name" value="FGGY_N"/>
</dbReference>
<dbReference type="PANTHER" id="PTHR10196">
    <property type="entry name" value="SUGAR KINASE"/>
    <property type="match status" value="1"/>
</dbReference>
<dbReference type="PANTHER" id="PTHR10196:SF57">
    <property type="entry name" value="XYLULOSE KINASE"/>
    <property type="match status" value="1"/>
</dbReference>
<dbReference type="Pfam" id="PF02782">
    <property type="entry name" value="FGGY_C"/>
    <property type="match status" value="1"/>
</dbReference>
<dbReference type="Pfam" id="PF00370">
    <property type="entry name" value="FGGY_N"/>
    <property type="match status" value="1"/>
</dbReference>
<dbReference type="SUPFAM" id="SSF53067">
    <property type="entry name" value="Actin-like ATPase domain"/>
    <property type="match status" value="2"/>
</dbReference>
<organism>
    <name type="scientific">Schizosaccharomyces pombe (strain 972 / ATCC 24843)</name>
    <name type="common">Fission yeast</name>
    <dbReference type="NCBI Taxonomy" id="284812"/>
    <lineage>
        <taxon>Eukaryota</taxon>
        <taxon>Fungi</taxon>
        <taxon>Dikarya</taxon>
        <taxon>Ascomycota</taxon>
        <taxon>Taphrinomycotina</taxon>
        <taxon>Schizosaccharomycetes</taxon>
        <taxon>Schizosaccharomycetales</taxon>
        <taxon>Schizosaccharomycetaceae</taxon>
        <taxon>Schizosaccharomyces</taxon>
    </lineage>
</organism>